<keyword id="KW-0027">Amidation</keyword>
<keyword id="KW-0903">Direct protein sequencing</keyword>
<keyword id="KW-0527">Neuropeptide</keyword>
<keyword id="KW-0964">Secreted</keyword>
<sequence>PFDRISNSAFSDF</sequence>
<proteinExistence type="evidence at protein level"/>
<evidence type="ECO:0000269" key="1">
    <source>
    </source>
</evidence>
<feature type="peptide" id="PRO_0000043905" description="Lymna-DF-amide 4">
    <location>
        <begin position="1"/>
        <end position="13"/>
    </location>
</feature>
<feature type="modified residue" description="Phenylalanine amide" evidence="1">
    <location>
        <position position="13"/>
    </location>
</feature>
<reference key="1">
    <citation type="journal article" date="1993" name="Eur. J. Biochem.">
        <title>LymnaDFamides, a new family of neuropeptides from the pond snail, Lymnaea stagnalis. Clue to cholecystokinin immunoreactivity in invertebrates?</title>
        <authorList>
            <person name="Johnsen A.H."/>
            <person name="Rehfeld J.F."/>
        </authorList>
    </citation>
    <scope>PROTEIN SEQUENCE</scope>
    <scope>AMIDATION AT PHE-13</scope>
    <source>
        <tissue>Ganglion</tissue>
    </source>
</reference>
<comment type="subcellular location">
    <subcellularLocation>
        <location>Secreted</location>
    </subcellularLocation>
</comment>
<accession>P80181</accession>
<dbReference type="PIR" id="S32474">
    <property type="entry name" value="S32474"/>
</dbReference>
<dbReference type="GO" id="GO:0005576">
    <property type="term" value="C:extracellular region"/>
    <property type="evidence" value="ECO:0007669"/>
    <property type="project" value="UniProtKB-SubCell"/>
</dbReference>
<dbReference type="GO" id="GO:0007218">
    <property type="term" value="P:neuropeptide signaling pathway"/>
    <property type="evidence" value="ECO:0007669"/>
    <property type="project" value="UniProtKB-KW"/>
</dbReference>
<name>DFAM4_LYMST</name>
<protein>
    <recommendedName>
        <fullName>Lymna-DF-amide 4</fullName>
    </recommendedName>
</protein>
<organism>
    <name type="scientific">Lymnaea stagnalis</name>
    <name type="common">Great pond snail</name>
    <name type="synonym">Helix stagnalis</name>
    <dbReference type="NCBI Taxonomy" id="6523"/>
    <lineage>
        <taxon>Eukaryota</taxon>
        <taxon>Metazoa</taxon>
        <taxon>Spiralia</taxon>
        <taxon>Lophotrochozoa</taxon>
        <taxon>Mollusca</taxon>
        <taxon>Gastropoda</taxon>
        <taxon>Heterobranchia</taxon>
        <taxon>Euthyneura</taxon>
        <taxon>Panpulmonata</taxon>
        <taxon>Hygrophila</taxon>
        <taxon>Lymnaeoidea</taxon>
        <taxon>Lymnaeidae</taxon>
        <taxon>Lymnaea</taxon>
    </lineage>
</organism>